<gene>
    <name evidence="1" type="primary">gmhA</name>
    <name type="ordered locus">BCG_0146</name>
</gene>
<accession>A1KET4</accession>
<keyword id="KW-0119">Carbohydrate metabolism</keyword>
<keyword id="KW-0963">Cytoplasm</keyword>
<keyword id="KW-0413">Isomerase</keyword>
<keyword id="KW-0479">Metal-binding</keyword>
<keyword id="KW-0862">Zinc</keyword>
<organism>
    <name type="scientific">Mycobacterium bovis (strain BCG / Pasteur 1173P2)</name>
    <dbReference type="NCBI Taxonomy" id="410289"/>
    <lineage>
        <taxon>Bacteria</taxon>
        <taxon>Bacillati</taxon>
        <taxon>Actinomycetota</taxon>
        <taxon>Actinomycetes</taxon>
        <taxon>Mycobacteriales</taxon>
        <taxon>Mycobacteriaceae</taxon>
        <taxon>Mycobacterium</taxon>
        <taxon>Mycobacterium tuberculosis complex</taxon>
    </lineage>
</organism>
<comment type="function">
    <text evidence="1">Catalyzes the isomerization of sedoheptulose 7-phosphate in D-glycero-D-manno-heptose 7-phosphate.</text>
</comment>
<comment type="catalytic activity">
    <reaction evidence="1">
        <text>2 D-sedoheptulose 7-phosphate = D-glycero-alpha-D-manno-heptose 7-phosphate + D-glycero-beta-D-manno-heptose 7-phosphate</text>
        <dbReference type="Rhea" id="RHEA:27489"/>
        <dbReference type="ChEBI" id="CHEBI:57483"/>
        <dbReference type="ChEBI" id="CHEBI:60203"/>
        <dbReference type="ChEBI" id="CHEBI:60204"/>
        <dbReference type="EC" id="5.3.1.28"/>
    </reaction>
</comment>
<comment type="cofactor">
    <cofactor evidence="1">
        <name>Zn(2+)</name>
        <dbReference type="ChEBI" id="CHEBI:29105"/>
    </cofactor>
    <text evidence="1">Binds 1 zinc ion per subunit.</text>
</comment>
<comment type="pathway">
    <text evidence="1">Carbohydrate biosynthesis; D-glycero-D-manno-heptose 7-phosphate biosynthesis; D-glycero-alpha-D-manno-heptose 7-phosphate and D-glycero-beta-D-manno-heptose 7-phosphate from sedoheptulose 7-phosphate: step 1/1.</text>
</comment>
<comment type="subcellular location">
    <subcellularLocation>
        <location evidence="1">Cytoplasm</location>
    </subcellularLocation>
</comment>
<comment type="miscellaneous">
    <text evidence="1">The reaction produces a racemic mixture of D-glycero-alpha-D-manno-heptose 7-phosphate and D-glycero-beta-D-manno-heptose 7-phosphate.</text>
</comment>
<comment type="similarity">
    <text evidence="1">Belongs to the SIS family. GmhA subfamily.</text>
</comment>
<evidence type="ECO:0000255" key="1">
    <source>
        <dbReference type="HAMAP-Rule" id="MF_00067"/>
    </source>
</evidence>
<protein>
    <recommendedName>
        <fullName evidence="1">Phosphoheptose isomerase</fullName>
        <ecNumber evidence="1">5.3.1.28</ecNumber>
    </recommendedName>
    <alternativeName>
        <fullName evidence="1">Sedoheptulose 7-phosphate isomerase</fullName>
    </alternativeName>
</protein>
<dbReference type="EC" id="5.3.1.28" evidence="1"/>
<dbReference type="EMBL" id="AM408590">
    <property type="protein sequence ID" value="CAL70131.1"/>
    <property type="molecule type" value="Genomic_DNA"/>
</dbReference>
<dbReference type="RefSeq" id="WP_003400839.1">
    <property type="nucleotide sequence ID" value="NC_008769.1"/>
</dbReference>
<dbReference type="SMR" id="A1KET4"/>
<dbReference type="KEGG" id="mbb:BCG_0146"/>
<dbReference type="HOGENOM" id="CLU_080999_1_1_11"/>
<dbReference type="UniPathway" id="UPA00041">
    <property type="reaction ID" value="UER00436"/>
</dbReference>
<dbReference type="Proteomes" id="UP000001472">
    <property type="component" value="Chromosome"/>
</dbReference>
<dbReference type="GO" id="GO:0005737">
    <property type="term" value="C:cytoplasm"/>
    <property type="evidence" value="ECO:0007669"/>
    <property type="project" value="UniProtKB-SubCell"/>
</dbReference>
<dbReference type="GO" id="GO:0097367">
    <property type="term" value="F:carbohydrate derivative binding"/>
    <property type="evidence" value="ECO:0007669"/>
    <property type="project" value="InterPro"/>
</dbReference>
<dbReference type="GO" id="GO:0008968">
    <property type="term" value="F:D-sedoheptulose 7-phosphate isomerase activity"/>
    <property type="evidence" value="ECO:0007669"/>
    <property type="project" value="UniProtKB-UniRule"/>
</dbReference>
<dbReference type="GO" id="GO:0008270">
    <property type="term" value="F:zinc ion binding"/>
    <property type="evidence" value="ECO:0007669"/>
    <property type="project" value="UniProtKB-UniRule"/>
</dbReference>
<dbReference type="GO" id="GO:0005975">
    <property type="term" value="P:carbohydrate metabolic process"/>
    <property type="evidence" value="ECO:0007669"/>
    <property type="project" value="UniProtKB-UniRule"/>
</dbReference>
<dbReference type="GO" id="GO:2001061">
    <property type="term" value="P:D-glycero-D-manno-heptose 7-phosphate biosynthetic process"/>
    <property type="evidence" value="ECO:0007669"/>
    <property type="project" value="UniProtKB-UniPathway"/>
</dbReference>
<dbReference type="CDD" id="cd05006">
    <property type="entry name" value="SIS_GmhA"/>
    <property type="match status" value="1"/>
</dbReference>
<dbReference type="Gene3D" id="3.40.50.10490">
    <property type="entry name" value="Glucose-6-phosphate isomerase like protein, domain 1"/>
    <property type="match status" value="1"/>
</dbReference>
<dbReference type="HAMAP" id="MF_00067">
    <property type="entry name" value="GmhA"/>
    <property type="match status" value="1"/>
</dbReference>
<dbReference type="InterPro" id="IPR035461">
    <property type="entry name" value="GmhA/DiaA"/>
</dbReference>
<dbReference type="InterPro" id="IPR004515">
    <property type="entry name" value="Phosphoheptose_Isoase"/>
</dbReference>
<dbReference type="InterPro" id="IPR001347">
    <property type="entry name" value="SIS_dom"/>
</dbReference>
<dbReference type="InterPro" id="IPR046348">
    <property type="entry name" value="SIS_dom_sf"/>
</dbReference>
<dbReference type="InterPro" id="IPR050099">
    <property type="entry name" value="SIS_GmhA/DiaA_subfam"/>
</dbReference>
<dbReference type="NCBIfam" id="NF010547">
    <property type="entry name" value="PRK13938.1"/>
    <property type="match status" value="1"/>
</dbReference>
<dbReference type="PANTHER" id="PTHR30390:SF6">
    <property type="entry name" value="DNAA INITIATOR-ASSOCIATING PROTEIN DIAA"/>
    <property type="match status" value="1"/>
</dbReference>
<dbReference type="PANTHER" id="PTHR30390">
    <property type="entry name" value="SEDOHEPTULOSE 7-PHOSPHATE ISOMERASE / DNAA INITIATOR-ASSOCIATING FACTOR FOR REPLICATION INITIATION"/>
    <property type="match status" value="1"/>
</dbReference>
<dbReference type="Pfam" id="PF13580">
    <property type="entry name" value="SIS_2"/>
    <property type="match status" value="1"/>
</dbReference>
<dbReference type="SUPFAM" id="SSF53697">
    <property type="entry name" value="SIS domain"/>
    <property type="match status" value="1"/>
</dbReference>
<dbReference type="PROSITE" id="PS51464">
    <property type="entry name" value="SIS"/>
    <property type="match status" value="1"/>
</dbReference>
<sequence length="196" mass="20923">MCTARTAEEIFVETIAVKTRILNDRVLLEAARAIGDRLIAGYRAGARVFMCGNGGSAADAQHFAAELTGHLIFDRPPLGAEALHANSSHLTAVANDYDYDTVFARALEGSARPGDTLFAISTSGNSMSVLRAAKTARELGVTVVAMTGESGGQLAEFADFLINVPSRDTGRIQESHIVFIHAISEHVEHALFAPRQ</sequence>
<reference key="1">
    <citation type="journal article" date="2007" name="Proc. Natl. Acad. Sci. U.S.A.">
        <title>Genome plasticity of BCG and impact on vaccine efficacy.</title>
        <authorList>
            <person name="Brosch R."/>
            <person name="Gordon S.V."/>
            <person name="Garnier T."/>
            <person name="Eiglmeier K."/>
            <person name="Frigui W."/>
            <person name="Valenti P."/>
            <person name="Dos Santos S."/>
            <person name="Duthoy S."/>
            <person name="Lacroix C."/>
            <person name="Garcia-Pelayo C."/>
            <person name="Inwald J.K."/>
            <person name="Golby P."/>
            <person name="Garcia J.N."/>
            <person name="Hewinson R.G."/>
            <person name="Behr M.A."/>
            <person name="Quail M.A."/>
            <person name="Churcher C."/>
            <person name="Barrell B.G."/>
            <person name="Parkhill J."/>
            <person name="Cole S.T."/>
        </authorList>
    </citation>
    <scope>NUCLEOTIDE SEQUENCE [LARGE SCALE GENOMIC DNA]</scope>
    <source>
        <strain>BCG / Pasteur 1173P2</strain>
    </source>
</reference>
<feature type="chain" id="PRO_1000009080" description="Phosphoheptose isomerase">
    <location>
        <begin position="1"/>
        <end position="196"/>
    </location>
</feature>
<feature type="domain" description="SIS" evidence="1">
    <location>
        <begin position="38"/>
        <end position="196"/>
    </location>
</feature>
<feature type="binding site" evidence="1">
    <location>
        <begin position="53"/>
        <end position="55"/>
    </location>
    <ligand>
        <name>substrate</name>
    </ligand>
</feature>
<feature type="binding site" evidence="1">
    <location>
        <position position="62"/>
    </location>
    <ligand>
        <name>Zn(2+)</name>
        <dbReference type="ChEBI" id="CHEBI:29105"/>
    </ligand>
</feature>
<feature type="binding site" evidence="1">
    <location>
        <position position="66"/>
    </location>
    <ligand>
        <name>substrate</name>
    </ligand>
</feature>
<feature type="binding site" evidence="1">
    <location>
        <position position="66"/>
    </location>
    <ligand>
        <name>Zn(2+)</name>
        <dbReference type="ChEBI" id="CHEBI:29105"/>
    </ligand>
</feature>
<feature type="binding site" evidence="1">
    <location>
        <begin position="95"/>
        <end position="96"/>
    </location>
    <ligand>
        <name>substrate</name>
    </ligand>
</feature>
<feature type="binding site" evidence="1">
    <location>
        <begin position="121"/>
        <end position="123"/>
    </location>
    <ligand>
        <name>substrate</name>
    </ligand>
</feature>
<feature type="binding site" evidence="1">
    <location>
        <position position="126"/>
    </location>
    <ligand>
        <name>substrate</name>
    </ligand>
</feature>
<feature type="binding site" evidence="1">
    <location>
        <position position="173"/>
    </location>
    <ligand>
        <name>substrate</name>
    </ligand>
</feature>
<feature type="binding site" evidence="1">
    <location>
        <position position="173"/>
    </location>
    <ligand>
        <name>Zn(2+)</name>
        <dbReference type="ChEBI" id="CHEBI:29105"/>
    </ligand>
</feature>
<feature type="binding site" evidence="1">
    <location>
        <position position="181"/>
    </location>
    <ligand>
        <name>Zn(2+)</name>
        <dbReference type="ChEBI" id="CHEBI:29105"/>
    </ligand>
</feature>
<name>GMHA_MYCBP</name>
<proteinExistence type="inferred from homology"/>